<evidence type="ECO:0000250" key="1"/>
<evidence type="ECO:0000255" key="2"/>
<evidence type="ECO:0000255" key="3">
    <source>
        <dbReference type="PROSITE-ProRule" id="PRU00280"/>
    </source>
</evidence>
<evidence type="ECO:0000305" key="4"/>
<gene>
    <name type="primary">ctpB</name>
    <name type="ordered locus">Rv0103c</name>
    <name type="ORF">MTCY251.22c</name>
</gene>
<name>CTPB_MYCTU</name>
<proteinExistence type="evidence at protein level"/>
<accession>P9WPT9</accession>
<accession>L0T4B7</accession>
<accession>P77905</accession>
<accession>Q10877</accession>
<protein>
    <recommendedName>
        <fullName>Cation-transporting P-type ATPase B</fullName>
        <ecNumber>7.2.2.-</ecNumber>
    </recommendedName>
</protein>
<reference key="1">
    <citation type="submission" date="1996-08" db="EMBL/GenBank/DDBJ databases">
        <authorList>
            <person name="Agranoff D.D."/>
            <person name="Krishna S.K."/>
            <person name="Griffin G.E."/>
            <person name="Mangan J."/>
        </authorList>
    </citation>
    <scope>NUCLEOTIDE SEQUENCE [GENOMIC DNA]</scope>
    <source>
        <strain>ATCC 25618 / H37Rv</strain>
    </source>
</reference>
<reference key="2">
    <citation type="journal article" date="1998" name="Nature">
        <title>Deciphering the biology of Mycobacterium tuberculosis from the complete genome sequence.</title>
        <authorList>
            <person name="Cole S.T."/>
            <person name="Brosch R."/>
            <person name="Parkhill J."/>
            <person name="Garnier T."/>
            <person name="Churcher C.M."/>
            <person name="Harris D.E."/>
            <person name="Gordon S.V."/>
            <person name="Eiglmeier K."/>
            <person name="Gas S."/>
            <person name="Barry C.E. III"/>
            <person name="Tekaia F."/>
            <person name="Badcock K."/>
            <person name="Basham D."/>
            <person name="Brown D."/>
            <person name="Chillingworth T."/>
            <person name="Connor R."/>
            <person name="Davies R.M."/>
            <person name="Devlin K."/>
            <person name="Feltwell T."/>
            <person name="Gentles S."/>
            <person name="Hamlin N."/>
            <person name="Holroyd S."/>
            <person name="Hornsby T."/>
            <person name="Jagels K."/>
            <person name="Krogh A."/>
            <person name="McLean J."/>
            <person name="Moule S."/>
            <person name="Murphy L.D."/>
            <person name="Oliver S."/>
            <person name="Osborne J."/>
            <person name="Quail M.A."/>
            <person name="Rajandream M.A."/>
            <person name="Rogers J."/>
            <person name="Rutter S."/>
            <person name="Seeger K."/>
            <person name="Skelton S."/>
            <person name="Squares S."/>
            <person name="Squares R."/>
            <person name="Sulston J.E."/>
            <person name="Taylor K."/>
            <person name="Whitehead S."/>
            <person name="Barrell B.G."/>
        </authorList>
    </citation>
    <scope>NUCLEOTIDE SEQUENCE [LARGE SCALE GENOMIC DNA]</scope>
    <source>
        <strain>ATCC 25618 / H37Rv</strain>
    </source>
</reference>
<reference key="3">
    <citation type="journal article" date="2011" name="Mol. Cell. Proteomics">
        <title>Proteogenomic analysis of Mycobacterium tuberculosis by high resolution mass spectrometry.</title>
        <authorList>
            <person name="Kelkar D.S."/>
            <person name="Kumar D."/>
            <person name="Kumar P."/>
            <person name="Balakrishnan L."/>
            <person name="Muthusamy B."/>
            <person name="Yadav A.K."/>
            <person name="Shrivastava P."/>
            <person name="Marimuthu A."/>
            <person name="Anand S."/>
            <person name="Sundaram H."/>
            <person name="Kingsbury R."/>
            <person name="Harsha H.C."/>
            <person name="Nair B."/>
            <person name="Prasad T.S."/>
            <person name="Chauhan D.S."/>
            <person name="Katoch K."/>
            <person name="Katoch V.M."/>
            <person name="Kumar P."/>
            <person name="Chaerkady R."/>
            <person name="Ramachandran S."/>
            <person name="Dash D."/>
            <person name="Pandey A."/>
        </authorList>
    </citation>
    <scope>IDENTIFICATION BY MASS SPECTROMETRY [LARGE SCALE ANALYSIS]</scope>
    <source>
        <strain>ATCC 25618 / H37Rv</strain>
    </source>
</reference>
<keyword id="KW-0067">ATP-binding</keyword>
<keyword id="KW-1003">Cell membrane</keyword>
<keyword id="KW-0460">Magnesium</keyword>
<keyword id="KW-0472">Membrane</keyword>
<keyword id="KW-0479">Metal-binding</keyword>
<keyword id="KW-0547">Nucleotide-binding</keyword>
<keyword id="KW-1185">Reference proteome</keyword>
<keyword id="KW-1278">Translocase</keyword>
<keyword id="KW-0812">Transmembrane</keyword>
<keyword id="KW-1133">Transmembrane helix</keyword>
<comment type="catalytic activity">
    <reaction>
        <text>ATP + H2O = ADP + phosphate + H(+)</text>
        <dbReference type="Rhea" id="RHEA:13065"/>
        <dbReference type="ChEBI" id="CHEBI:15377"/>
        <dbReference type="ChEBI" id="CHEBI:15378"/>
        <dbReference type="ChEBI" id="CHEBI:30616"/>
        <dbReference type="ChEBI" id="CHEBI:43474"/>
        <dbReference type="ChEBI" id="CHEBI:456216"/>
    </reaction>
</comment>
<comment type="subcellular location">
    <subcellularLocation>
        <location evidence="4">Cell membrane</location>
        <topology evidence="4">Multi-pass membrane protein</topology>
    </subcellularLocation>
</comment>
<comment type="similarity">
    <text evidence="4">Belongs to the cation transport ATPase (P-type) (TC 3.A.3) family. Type IB subfamily.</text>
</comment>
<sequence length="752" mass="77509">MAAPVVGDADLQSVRRIRLDVLGMSCAACASRVETKLNKIPGVRASVNFATRVATIDAVGMAADELCGVVEKAGYHAAPHTETTVLDKRTKDPDGAHARRLLRRLLVAAVLFVPLADLSTLFAIVPSARVPGWGYILTALAAPVVTWAAWPFHSVALRNARHRTTSMETLISVGIVAATAWSLSSVFGDQPPREGSGIWRAILNSDSIYLEVAAGVTVFVLAGRYFEARAKSKAGSALRALAELGAKNVAVLLPDGAELVIPASELKKRQRFVTRPGETIAADGVVVDGSAAIDMSAMTGEAKPVRAYPAASVVGGTVVMDGRLVIEATAVGADTQFAAMVRLVEQAQTQKARAQRLADHIAGVFVPVVFVIAGLAGAAWLVSGAGADRAFSVTLGVLVIACPCALGLATPTAMMVASGRGAQLGIFIKGYRALETIRSIDTVVFDKTGTLTVGQLAVSTVTMAGSGTSERDREEVLGLAAAVESASEHAMAAAIVAASPDPGPVNGFVAVAGCGVSGEVGGHHVEVGKPSWITRTTPCHDAALVSARLDGESRGETVVFVSVDGVVRAALTIADTLKDSAAAAVAALRSRGLRTILLTGDNRAAADAVAAQVGIDSAVADMLPEGKVDVIQRLREEGHTVAMVGDGINDGPALVGADLGLAIGRGTDVALGAADIILVRDDLNTVPQALDLARATMRTIRMNMIWAFGYNVAAIPIAAAGLLNPLIAGAAMAFSSFFVVSNSLRLRNFGAQ</sequence>
<feature type="chain" id="PRO_0000046168" description="Cation-transporting P-type ATPase B">
    <location>
        <begin position="1"/>
        <end position="752"/>
    </location>
</feature>
<feature type="transmembrane region" description="Helical" evidence="2">
    <location>
        <begin position="105"/>
        <end position="125"/>
    </location>
</feature>
<feature type="transmembrane region" description="Helical" evidence="2">
    <location>
        <begin position="132"/>
        <end position="152"/>
    </location>
</feature>
<feature type="transmembrane region" description="Helical" evidence="2">
    <location>
        <begin position="167"/>
        <end position="187"/>
    </location>
</feature>
<feature type="transmembrane region" description="Helical" evidence="2">
    <location>
        <begin position="201"/>
        <end position="221"/>
    </location>
</feature>
<feature type="transmembrane region" description="Helical" evidence="2">
    <location>
        <begin position="361"/>
        <end position="381"/>
    </location>
</feature>
<feature type="transmembrane region" description="Helical" evidence="2">
    <location>
        <begin position="390"/>
        <end position="410"/>
    </location>
</feature>
<feature type="transmembrane region" description="Helical" evidence="2">
    <location>
        <begin position="491"/>
        <end position="511"/>
    </location>
</feature>
<feature type="transmembrane region" description="Helical" evidence="2">
    <location>
        <begin position="714"/>
        <end position="734"/>
    </location>
</feature>
<feature type="domain" description="HMA" evidence="3">
    <location>
        <begin position="15"/>
        <end position="78"/>
    </location>
</feature>
<feature type="active site" description="4-aspartylphosphate intermediate" evidence="1">
    <location>
        <position position="446"/>
    </location>
</feature>
<feature type="binding site" evidence="3">
    <location>
        <position position="26"/>
    </location>
    <ligand>
        <name>a metal cation</name>
        <dbReference type="ChEBI" id="CHEBI:25213"/>
    </ligand>
</feature>
<feature type="binding site" evidence="3">
    <location>
        <position position="29"/>
    </location>
    <ligand>
        <name>a metal cation</name>
        <dbReference type="ChEBI" id="CHEBI:25213"/>
    </ligand>
</feature>
<dbReference type="EC" id="7.2.2.-"/>
<dbReference type="EMBL" id="Y07638">
    <property type="protein sequence ID" value="CAA68915.1"/>
    <property type="molecule type" value="Genomic_DNA"/>
</dbReference>
<dbReference type="EMBL" id="AL123456">
    <property type="protein sequence ID" value="CCP42828.1"/>
    <property type="molecule type" value="Genomic_DNA"/>
</dbReference>
<dbReference type="PIR" id="G70751">
    <property type="entry name" value="G70751"/>
</dbReference>
<dbReference type="RefSeq" id="NP_214617.1">
    <property type="nucleotide sequence ID" value="NC_000962.3"/>
</dbReference>
<dbReference type="RefSeq" id="WP_009935939.1">
    <property type="nucleotide sequence ID" value="NZ_NVQJ01000053.1"/>
</dbReference>
<dbReference type="SMR" id="P9WPT9"/>
<dbReference type="FunCoup" id="P9WPT9">
    <property type="interactions" value="267"/>
</dbReference>
<dbReference type="STRING" id="83332.Rv0103c"/>
<dbReference type="PaxDb" id="83332-Rv0103c"/>
<dbReference type="DNASU" id="886928"/>
<dbReference type="GeneID" id="886928"/>
<dbReference type="KEGG" id="mtu:Rv0103c"/>
<dbReference type="KEGG" id="mtv:RVBD_0103c"/>
<dbReference type="TubercuList" id="Rv0103c"/>
<dbReference type="eggNOG" id="COG2217">
    <property type="taxonomic scope" value="Bacteria"/>
</dbReference>
<dbReference type="InParanoid" id="P9WPT9"/>
<dbReference type="OrthoDB" id="7059309at2"/>
<dbReference type="PhylomeDB" id="P9WPT9"/>
<dbReference type="Proteomes" id="UP000001584">
    <property type="component" value="Chromosome"/>
</dbReference>
<dbReference type="GO" id="GO:0005829">
    <property type="term" value="C:cytosol"/>
    <property type="evidence" value="ECO:0007005"/>
    <property type="project" value="MTBBASE"/>
</dbReference>
<dbReference type="GO" id="GO:0016020">
    <property type="term" value="C:membrane"/>
    <property type="evidence" value="ECO:0000318"/>
    <property type="project" value="GO_Central"/>
</dbReference>
<dbReference type="GO" id="GO:0005886">
    <property type="term" value="C:plasma membrane"/>
    <property type="evidence" value="ECO:0007005"/>
    <property type="project" value="MTBBASE"/>
</dbReference>
<dbReference type="GO" id="GO:0005524">
    <property type="term" value="F:ATP binding"/>
    <property type="evidence" value="ECO:0007669"/>
    <property type="project" value="UniProtKB-KW"/>
</dbReference>
<dbReference type="GO" id="GO:0016887">
    <property type="term" value="F:ATP hydrolysis activity"/>
    <property type="evidence" value="ECO:0007669"/>
    <property type="project" value="InterPro"/>
</dbReference>
<dbReference type="GO" id="GO:0005507">
    <property type="term" value="F:copper ion binding"/>
    <property type="evidence" value="ECO:0000318"/>
    <property type="project" value="GO_Central"/>
</dbReference>
<dbReference type="GO" id="GO:0043682">
    <property type="term" value="F:P-type divalent copper transporter activity"/>
    <property type="evidence" value="ECO:0000318"/>
    <property type="project" value="GO_Central"/>
</dbReference>
<dbReference type="GO" id="GO:0055070">
    <property type="term" value="P:copper ion homeostasis"/>
    <property type="evidence" value="ECO:0000318"/>
    <property type="project" value="GO_Central"/>
</dbReference>
<dbReference type="CDD" id="cd00371">
    <property type="entry name" value="HMA"/>
    <property type="match status" value="1"/>
</dbReference>
<dbReference type="FunFam" id="3.30.70.100:FF:000005">
    <property type="entry name" value="Copper-exporting P-type ATPase A"/>
    <property type="match status" value="1"/>
</dbReference>
<dbReference type="FunFam" id="2.70.150.10:FF:000002">
    <property type="entry name" value="Copper-transporting ATPase 1, putative"/>
    <property type="match status" value="1"/>
</dbReference>
<dbReference type="Gene3D" id="3.30.70.100">
    <property type="match status" value="1"/>
</dbReference>
<dbReference type="Gene3D" id="3.40.1110.10">
    <property type="entry name" value="Calcium-transporting ATPase, cytoplasmic domain N"/>
    <property type="match status" value="1"/>
</dbReference>
<dbReference type="Gene3D" id="2.70.150.10">
    <property type="entry name" value="Calcium-transporting ATPase, cytoplasmic transduction domain A"/>
    <property type="match status" value="1"/>
</dbReference>
<dbReference type="Gene3D" id="3.40.50.1000">
    <property type="entry name" value="HAD superfamily/HAD-like"/>
    <property type="match status" value="1"/>
</dbReference>
<dbReference type="InterPro" id="IPR023299">
    <property type="entry name" value="ATPase_P-typ_cyto_dom_N"/>
</dbReference>
<dbReference type="InterPro" id="IPR018303">
    <property type="entry name" value="ATPase_P-typ_P_site"/>
</dbReference>
<dbReference type="InterPro" id="IPR023298">
    <property type="entry name" value="ATPase_P-typ_TM_dom_sf"/>
</dbReference>
<dbReference type="InterPro" id="IPR008250">
    <property type="entry name" value="ATPase_P-typ_transduc_dom_A_sf"/>
</dbReference>
<dbReference type="InterPro" id="IPR000579">
    <property type="entry name" value="Cation-trans_P-type_ATPase_A/B"/>
</dbReference>
<dbReference type="InterPro" id="IPR036412">
    <property type="entry name" value="HAD-like_sf"/>
</dbReference>
<dbReference type="InterPro" id="IPR023214">
    <property type="entry name" value="HAD_sf"/>
</dbReference>
<dbReference type="InterPro" id="IPR017969">
    <property type="entry name" value="Heavy-metal-associated_CS"/>
</dbReference>
<dbReference type="InterPro" id="IPR006121">
    <property type="entry name" value="HMA_dom"/>
</dbReference>
<dbReference type="InterPro" id="IPR036163">
    <property type="entry name" value="HMA_dom_sf"/>
</dbReference>
<dbReference type="InterPro" id="IPR027256">
    <property type="entry name" value="P-typ_ATPase_IB"/>
</dbReference>
<dbReference type="InterPro" id="IPR001757">
    <property type="entry name" value="P_typ_ATPase"/>
</dbReference>
<dbReference type="InterPro" id="IPR044492">
    <property type="entry name" value="P_typ_ATPase_HD_dom"/>
</dbReference>
<dbReference type="NCBIfam" id="TIGR01511">
    <property type="entry name" value="ATPase-IB1_Cu"/>
    <property type="match status" value="1"/>
</dbReference>
<dbReference type="NCBIfam" id="TIGR01525">
    <property type="entry name" value="ATPase-IB_hvy"/>
    <property type="match status" value="1"/>
</dbReference>
<dbReference type="NCBIfam" id="TIGR01494">
    <property type="entry name" value="ATPase_P-type"/>
    <property type="match status" value="2"/>
</dbReference>
<dbReference type="PANTHER" id="PTHR43520">
    <property type="entry name" value="ATP7, ISOFORM B"/>
    <property type="match status" value="1"/>
</dbReference>
<dbReference type="PANTHER" id="PTHR43520:SF8">
    <property type="entry name" value="P-TYPE CU(+) TRANSPORTER"/>
    <property type="match status" value="1"/>
</dbReference>
<dbReference type="Pfam" id="PF00122">
    <property type="entry name" value="E1-E2_ATPase"/>
    <property type="match status" value="1"/>
</dbReference>
<dbReference type="Pfam" id="PF00403">
    <property type="entry name" value="HMA"/>
    <property type="match status" value="1"/>
</dbReference>
<dbReference type="Pfam" id="PF00702">
    <property type="entry name" value="Hydrolase"/>
    <property type="match status" value="1"/>
</dbReference>
<dbReference type="PRINTS" id="PR00119">
    <property type="entry name" value="CATATPASE"/>
</dbReference>
<dbReference type="PRINTS" id="PR00940">
    <property type="entry name" value="CATPATPASEA"/>
</dbReference>
<dbReference type="SFLD" id="SFLDS00003">
    <property type="entry name" value="Haloacid_Dehalogenase"/>
    <property type="match status" value="1"/>
</dbReference>
<dbReference type="SFLD" id="SFLDF00027">
    <property type="entry name" value="p-type_atpase"/>
    <property type="match status" value="1"/>
</dbReference>
<dbReference type="SUPFAM" id="SSF81653">
    <property type="entry name" value="Calcium ATPase, transduction domain A"/>
    <property type="match status" value="1"/>
</dbReference>
<dbReference type="SUPFAM" id="SSF81665">
    <property type="entry name" value="Calcium ATPase, transmembrane domain M"/>
    <property type="match status" value="1"/>
</dbReference>
<dbReference type="SUPFAM" id="SSF56784">
    <property type="entry name" value="HAD-like"/>
    <property type="match status" value="1"/>
</dbReference>
<dbReference type="SUPFAM" id="SSF55008">
    <property type="entry name" value="HMA, heavy metal-associated domain"/>
    <property type="match status" value="1"/>
</dbReference>
<dbReference type="PROSITE" id="PS00154">
    <property type="entry name" value="ATPASE_E1_E2"/>
    <property type="match status" value="1"/>
</dbReference>
<dbReference type="PROSITE" id="PS01047">
    <property type="entry name" value="HMA_1"/>
    <property type="match status" value="1"/>
</dbReference>
<dbReference type="PROSITE" id="PS50846">
    <property type="entry name" value="HMA_2"/>
    <property type="match status" value="1"/>
</dbReference>
<organism>
    <name type="scientific">Mycobacterium tuberculosis (strain ATCC 25618 / H37Rv)</name>
    <dbReference type="NCBI Taxonomy" id="83332"/>
    <lineage>
        <taxon>Bacteria</taxon>
        <taxon>Bacillati</taxon>
        <taxon>Actinomycetota</taxon>
        <taxon>Actinomycetes</taxon>
        <taxon>Mycobacteriales</taxon>
        <taxon>Mycobacteriaceae</taxon>
        <taxon>Mycobacterium</taxon>
        <taxon>Mycobacterium tuberculosis complex</taxon>
    </lineage>
</organism>